<organism>
    <name type="scientific">Bacillus velezensis (strain DSM 23117 / BGSC 10A6 / LMG 26770 / FZB42)</name>
    <name type="common">Bacillus amyloliquefaciens subsp. plantarum</name>
    <dbReference type="NCBI Taxonomy" id="326423"/>
    <lineage>
        <taxon>Bacteria</taxon>
        <taxon>Bacillati</taxon>
        <taxon>Bacillota</taxon>
        <taxon>Bacilli</taxon>
        <taxon>Bacillales</taxon>
        <taxon>Bacillaceae</taxon>
        <taxon>Bacillus</taxon>
        <taxon>Bacillus amyloliquefaciens group</taxon>
    </lineage>
</organism>
<comment type="function">
    <text evidence="1">Responsible for synthesis of pseudouridine from uracil-55 in the psi GC loop of transfer RNAs.</text>
</comment>
<comment type="catalytic activity">
    <reaction evidence="1">
        <text>uridine(55) in tRNA = pseudouridine(55) in tRNA</text>
        <dbReference type="Rhea" id="RHEA:42532"/>
        <dbReference type="Rhea" id="RHEA-COMP:10101"/>
        <dbReference type="Rhea" id="RHEA-COMP:10102"/>
        <dbReference type="ChEBI" id="CHEBI:65314"/>
        <dbReference type="ChEBI" id="CHEBI:65315"/>
        <dbReference type="EC" id="5.4.99.25"/>
    </reaction>
</comment>
<comment type="similarity">
    <text evidence="1">Belongs to the pseudouridine synthase TruB family. Type 1 subfamily.</text>
</comment>
<protein>
    <recommendedName>
        <fullName evidence="1">tRNA pseudouridine synthase B</fullName>
        <ecNumber evidence="1">5.4.99.25</ecNumber>
    </recommendedName>
    <alternativeName>
        <fullName evidence="1">tRNA pseudouridine(55) synthase</fullName>
        <shortName evidence="1">Psi55 synthase</shortName>
    </alternativeName>
    <alternativeName>
        <fullName evidence="1">tRNA pseudouridylate synthase</fullName>
    </alternativeName>
    <alternativeName>
        <fullName evidence="1">tRNA-uridine isomerase</fullName>
    </alternativeName>
</protein>
<reference key="1">
    <citation type="journal article" date="2007" name="Nat. Biotechnol.">
        <title>Comparative analysis of the complete genome sequence of the plant growth-promoting bacterium Bacillus amyloliquefaciens FZB42.</title>
        <authorList>
            <person name="Chen X.H."/>
            <person name="Koumoutsi A."/>
            <person name="Scholz R."/>
            <person name="Eisenreich A."/>
            <person name="Schneider K."/>
            <person name="Heinemeyer I."/>
            <person name="Morgenstern B."/>
            <person name="Voss B."/>
            <person name="Hess W.R."/>
            <person name="Reva O."/>
            <person name="Junge H."/>
            <person name="Voigt B."/>
            <person name="Jungblut P.R."/>
            <person name="Vater J."/>
            <person name="Suessmuth R."/>
            <person name="Liesegang H."/>
            <person name="Strittmatter A."/>
            <person name="Gottschalk G."/>
            <person name="Borriss R."/>
        </authorList>
    </citation>
    <scope>NUCLEOTIDE SEQUENCE [LARGE SCALE GENOMIC DNA]</scope>
    <source>
        <strain>DSM 23117 / BGSC 10A6 / LMG 26770 / FZB42</strain>
    </source>
</reference>
<feature type="chain" id="PRO_1000084546" description="tRNA pseudouridine synthase B">
    <location>
        <begin position="1"/>
        <end position="309"/>
    </location>
</feature>
<feature type="active site" description="Nucleophile" evidence="1">
    <location>
        <position position="39"/>
    </location>
</feature>
<evidence type="ECO:0000255" key="1">
    <source>
        <dbReference type="HAMAP-Rule" id="MF_01080"/>
    </source>
</evidence>
<dbReference type="EC" id="5.4.99.25" evidence="1"/>
<dbReference type="EMBL" id="CP000560">
    <property type="protein sequence ID" value="ABS74013.1"/>
    <property type="molecule type" value="Genomic_DNA"/>
</dbReference>
<dbReference type="RefSeq" id="WP_012117567.1">
    <property type="nucleotide sequence ID" value="NC_009725.2"/>
</dbReference>
<dbReference type="SMR" id="A7Z4T7"/>
<dbReference type="GeneID" id="93080783"/>
<dbReference type="KEGG" id="bay:RBAM_016500"/>
<dbReference type="HOGENOM" id="CLU_032087_0_1_9"/>
<dbReference type="Proteomes" id="UP000001120">
    <property type="component" value="Chromosome"/>
</dbReference>
<dbReference type="GO" id="GO:0003723">
    <property type="term" value="F:RNA binding"/>
    <property type="evidence" value="ECO:0007669"/>
    <property type="project" value="InterPro"/>
</dbReference>
<dbReference type="GO" id="GO:0160148">
    <property type="term" value="F:tRNA pseudouridine(55) synthase activity"/>
    <property type="evidence" value="ECO:0007669"/>
    <property type="project" value="UniProtKB-EC"/>
</dbReference>
<dbReference type="GO" id="GO:1990481">
    <property type="term" value="P:mRNA pseudouridine synthesis"/>
    <property type="evidence" value="ECO:0007669"/>
    <property type="project" value="TreeGrafter"/>
</dbReference>
<dbReference type="GO" id="GO:0031119">
    <property type="term" value="P:tRNA pseudouridine synthesis"/>
    <property type="evidence" value="ECO:0007669"/>
    <property type="project" value="UniProtKB-UniRule"/>
</dbReference>
<dbReference type="CDD" id="cd02573">
    <property type="entry name" value="PseudoU_synth_EcTruB"/>
    <property type="match status" value="1"/>
</dbReference>
<dbReference type="FunFam" id="3.30.2350.10:FF:000011">
    <property type="entry name" value="tRNA pseudouridine synthase B"/>
    <property type="match status" value="1"/>
</dbReference>
<dbReference type="Gene3D" id="3.30.2350.10">
    <property type="entry name" value="Pseudouridine synthase"/>
    <property type="match status" value="1"/>
</dbReference>
<dbReference type="HAMAP" id="MF_01080">
    <property type="entry name" value="TruB_bact"/>
    <property type="match status" value="1"/>
</dbReference>
<dbReference type="InterPro" id="IPR020103">
    <property type="entry name" value="PsdUridine_synth_cat_dom_sf"/>
</dbReference>
<dbReference type="InterPro" id="IPR002501">
    <property type="entry name" value="PsdUridine_synth_N"/>
</dbReference>
<dbReference type="InterPro" id="IPR014780">
    <property type="entry name" value="tRNA_psdUridine_synth_TruB"/>
</dbReference>
<dbReference type="InterPro" id="IPR032819">
    <property type="entry name" value="TruB_C"/>
</dbReference>
<dbReference type="NCBIfam" id="TIGR00431">
    <property type="entry name" value="TruB"/>
    <property type="match status" value="1"/>
</dbReference>
<dbReference type="PANTHER" id="PTHR13767:SF2">
    <property type="entry name" value="PSEUDOURIDYLATE SYNTHASE TRUB1"/>
    <property type="match status" value="1"/>
</dbReference>
<dbReference type="PANTHER" id="PTHR13767">
    <property type="entry name" value="TRNA-PSEUDOURIDINE SYNTHASE"/>
    <property type="match status" value="1"/>
</dbReference>
<dbReference type="Pfam" id="PF16198">
    <property type="entry name" value="TruB_C_2"/>
    <property type="match status" value="1"/>
</dbReference>
<dbReference type="Pfam" id="PF01509">
    <property type="entry name" value="TruB_N"/>
    <property type="match status" value="1"/>
</dbReference>
<dbReference type="SUPFAM" id="SSF55120">
    <property type="entry name" value="Pseudouridine synthase"/>
    <property type="match status" value="1"/>
</dbReference>
<proteinExistence type="inferred from homology"/>
<name>TRUB_BACVZ</name>
<keyword id="KW-0413">Isomerase</keyword>
<keyword id="KW-0819">tRNA processing</keyword>
<gene>
    <name evidence="1" type="primary">truB</name>
    <name type="ordered locus">RBAM_016500</name>
</gene>
<sequence length="309" mass="33858">MVNGVLLLHKPVGMTSHDCVMKIRKLLKTKKVGHTGTLDPEVSGVLPICVGRATKIVEYVTDKSKTYDAEITLGFSTSTEDQTGETVSVKPVKEPLKEADIKAVLDELKGPQEQVPPMYSAVKVNGKKLYEYARAGIEVERPKRNITIEDIALTSPVTYNEDTASFRFTVTCSKGTYVRTLAVTIGEKLGYPAHMSHLIRTASGDFSLDECFTFEELEQQVSDGTVAEHAVPIDRALNHLPKWVISDTLAKKAENGSVFDIPAEFSAMTADARIAVCTEDGECVAIYMPHPSKKGLLKPAKVLMQKSEQ</sequence>
<accession>A7Z4T7</accession>